<proteinExistence type="inferred from homology"/>
<organism>
    <name type="scientific">Schizosaccharomyces pombe (strain 972 / ATCC 24843)</name>
    <name type="common">Fission yeast</name>
    <dbReference type="NCBI Taxonomy" id="284812"/>
    <lineage>
        <taxon>Eukaryota</taxon>
        <taxon>Fungi</taxon>
        <taxon>Dikarya</taxon>
        <taxon>Ascomycota</taxon>
        <taxon>Taphrinomycotina</taxon>
        <taxon>Schizosaccharomycetes</taxon>
        <taxon>Schizosaccharomycetales</taxon>
        <taxon>Schizosaccharomycetaceae</taxon>
        <taxon>Schizosaccharomyces</taxon>
    </lineage>
</organism>
<keyword id="KW-0472">Membrane</keyword>
<keyword id="KW-1185">Reference proteome</keyword>
<keyword id="KW-0812">Transmembrane</keyword>
<keyword id="KW-1133">Transmembrane helix</keyword>
<keyword id="KW-0813">Transport</keyword>
<reference key="1">
    <citation type="journal article" date="2002" name="Nature">
        <title>The genome sequence of Schizosaccharomyces pombe.</title>
        <authorList>
            <person name="Wood V."/>
            <person name="Gwilliam R."/>
            <person name="Rajandream M.A."/>
            <person name="Lyne M.H."/>
            <person name="Lyne R."/>
            <person name="Stewart A."/>
            <person name="Sgouros J.G."/>
            <person name="Peat N."/>
            <person name="Hayles J."/>
            <person name="Baker S.G."/>
            <person name="Basham D."/>
            <person name="Bowman S."/>
            <person name="Brooks K."/>
            <person name="Brown D."/>
            <person name="Brown S."/>
            <person name="Chillingworth T."/>
            <person name="Churcher C.M."/>
            <person name="Collins M."/>
            <person name="Connor R."/>
            <person name="Cronin A."/>
            <person name="Davis P."/>
            <person name="Feltwell T."/>
            <person name="Fraser A."/>
            <person name="Gentles S."/>
            <person name="Goble A."/>
            <person name="Hamlin N."/>
            <person name="Harris D.E."/>
            <person name="Hidalgo J."/>
            <person name="Hodgson G."/>
            <person name="Holroyd S."/>
            <person name="Hornsby T."/>
            <person name="Howarth S."/>
            <person name="Huckle E.J."/>
            <person name="Hunt S."/>
            <person name="Jagels K."/>
            <person name="James K.D."/>
            <person name="Jones L."/>
            <person name="Jones M."/>
            <person name="Leather S."/>
            <person name="McDonald S."/>
            <person name="McLean J."/>
            <person name="Mooney P."/>
            <person name="Moule S."/>
            <person name="Mungall K.L."/>
            <person name="Murphy L.D."/>
            <person name="Niblett D."/>
            <person name="Odell C."/>
            <person name="Oliver K."/>
            <person name="O'Neil S."/>
            <person name="Pearson D."/>
            <person name="Quail M.A."/>
            <person name="Rabbinowitsch E."/>
            <person name="Rutherford K.M."/>
            <person name="Rutter S."/>
            <person name="Saunders D."/>
            <person name="Seeger K."/>
            <person name="Sharp S."/>
            <person name="Skelton J."/>
            <person name="Simmonds M.N."/>
            <person name="Squares R."/>
            <person name="Squares S."/>
            <person name="Stevens K."/>
            <person name="Taylor K."/>
            <person name="Taylor R.G."/>
            <person name="Tivey A."/>
            <person name="Walsh S.V."/>
            <person name="Warren T."/>
            <person name="Whitehead S."/>
            <person name="Woodward J.R."/>
            <person name="Volckaert G."/>
            <person name="Aert R."/>
            <person name="Robben J."/>
            <person name="Grymonprez B."/>
            <person name="Weltjens I."/>
            <person name="Vanstreels E."/>
            <person name="Rieger M."/>
            <person name="Schaefer M."/>
            <person name="Mueller-Auer S."/>
            <person name="Gabel C."/>
            <person name="Fuchs M."/>
            <person name="Duesterhoeft A."/>
            <person name="Fritzc C."/>
            <person name="Holzer E."/>
            <person name="Moestl D."/>
            <person name="Hilbert H."/>
            <person name="Borzym K."/>
            <person name="Langer I."/>
            <person name="Beck A."/>
            <person name="Lehrach H."/>
            <person name="Reinhardt R."/>
            <person name="Pohl T.M."/>
            <person name="Eger P."/>
            <person name="Zimmermann W."/>
            <person name="Wedler H."/>
            <person name="Wambutt R."/>
            <person name="Purnelle B."/>
            <person name="Goffeau A."/>
            <person name="Cadieu E."/>
            <person name="Dreano S."/>
            <person name="Gloux S."/>
            <person name="Lelaure V."/>
            <person name="Mottier S."/>
            <person name="Galibert F."/>
            <person name="Aves S.J."/>
            <person name="Xiang Z."/>
            <person name="Hunt C."/>
            <person name="Moore K."/>
            <person name="Hurst S.M."/>
            <person name="Lucas M."/>
            <person name="Rochet M."/>
            <person name="Gaillardin C."/>
            <person name="Tallada V.A."/>
            <person name="Garzon A."/>
            <person name="Thode G."/>
            <person name="Daga R.R."/>
            <person name="Cruzado L."/>
            <person name="Jimenez J."/>
            <person name="Sanchez M."/>
            <person name="del Rey F."/>
            <person name="Benito J."/>
            <person name="Dominguez A."/>
            <person name="Revuelta J.L."/>
            <person name="Moreno S."/>
            <person name="Armstrong J."/>
            <person name="Forsburg S.L."/>
            <person name="Cerutti L."/>
            <person name="Lowe T."/>
            <person name="McCombie W.R."/>
            <person name="Paulsen I."/>
            <person name="Potashkin J."/>
            <person name="Shpakovski G.V."/>
            <person name="Ussery D."/>
            <person name="Barrell B.G."/>
            <person name="Nurse P."/>
        </authorList>
    </citation>
    <scope>NUCLEOTIDE SEQUENCE [LARGE SCALE GENOMIC DNA]</scope>
    <source>
        <strain>972 / ATCC 24843</strain>
    </source>
</reference>
<reference key="2">
    <citation type="journal article" date="2000" name="Genes Cells">
        <title>Large-scale screening of intracellular protein localization in living fission yeast cells by the use of a GFP-fusion genomic DNA library.</title>
        <authorList>
            <person name="Ding D.-Q."/>
            <person name="Tomita Y."/>
            <person name="Yamamoto A."/>
            <person name="Chikashige Y."/>
            <person name="Haraguchi T."/>
            <person name="Hiraoka Y."/>
        </authorList>
    </citation>
    <scope>NUCLEOTIDE SEQUENCE [LARGE SCALE GENOMIC DNA] OF 73-263</scope>
    <scope>SUBCELLULAR LOCATION</scope>
    <source>
        <strain>ATCC 38364 / 968</strain>
    </source>
</reference>
<name>YIY4_SCHPO</name>
<feature type="chain" id="PRO_0000116799" description="Uncharacterized transporter C22F8.04">
    <location>
        <begin position="1"/>
        <end position="383"/>
    </location>
</feature>
<feature type="transmembrane region" description="Helical" evidence="1">
    <location>
        <begin position="87"/>
        <end position="107"/>
    </location>
</feature>
<feature type="transmembrane region" description="Helical" evidence="1">
    <location>
        <begin position="112"/>
        <end position="132"/>
    </location>
</feature>
<feature type="transmembrane region" description="Helical" evidence="1">
    <location>
        <begin position="157"/>
        <end position="177"/>
    </location>
</feature>
<feature type="transmembrane region" description="Helical" evidence="1">
    <location>
        <begin position="179"/>
        <end position="199"/>
    </location>
</feature>
<feature type="transmembrane region" description="Helical" evidence="1">
    <location>
        <begin position="205"/>
        <end position="225"/>
    </location>
</feature>
<feature type="transmembrane region" description="Helical" evidence="1">
    <location>
        <begin position="228"/>
        <end position="248"/>
    </location>
</feature>
<feature type="transmembrane region" description="Helical" evidence="1">
    <location>
        <begin position="262"/>
        <end position="282"/>
    </location>
</feature>
<feature type="transmembrane region" description="Helical" evidence="1">
    <location>
        <begin position="299"/>
        <end position="319"/>
    </location>
</feature>
<feature type="transmembrane region" description="Helical" evidence="1">
    <location>
        <begin position="329"/>
        <end position="349"/>
    </location>
</feature>
<feature type="transmembrane region" description="Helical" evidence="1">
    <location>
        <begin position="352"/>
        <end position="372"/>
    </location>
</feature>
<feature type="region of interest" description="Disordered" evidence="2">
    <location>
        <begin position="1"/>
        <end position="55"/>
    </location>
</feature>
<feature type="compositionally biased region" description="Basic and acidic residues" evidence="2">
    <location>
        <begin position="13"/>
        <end position="24"/>
    </location>
</feature>
<feature type="compositionally biased region" description="Polar residues" evidence="2">
    <location>
        <begin position="25"/>
        <end position="44"/>
    </location>
</feature>
<feature type="compositionally biased region" description="Basic and acidic residues" evidence="2">
    <location>
        <begin position="46"/>
        <end position="55"/>
    </location>
</feature>
<feature type="sequence conflict" description="In Ref. 2; BAA87167." evidence="4" ref="2">
    <original>NAKEPDSENAPVSRLTI</original>
    <variation>QCKRARLGKCSCFTTDQ</variation>
    <location>
        <begin position="73"/>
        <end position="89"/>
    </location>
</feature>
<dbReference type="EMBL" id="CU329670">
    <property type="protein sequence ID" value="CAB52714.1"/>
    <property type="molecule type" value="Genomic_DNA"/>
</dbReference>
<dbReference type="EMBL" id="AB027863">
    <property type="protein sequence ID" value="BAA87167.1"/>
    <property type="molecule type" value="Genomic_DNA"/>
</dbReference>
<dbReference type="PIR" id="T38194">
    <property type="entry name" value="T38194"/>
</dbReference>
<dbReference type="SMR" id="Q9UUI8"/>
<dbReference type="BioGRID" id="278385">
    <property type="interactions" value="3"/>
</dbReference>
<dbReference type="FunCoup" id="Q9UUI8">
    <property type="interactions" value="129"/>
</dbReference>
<dbReference type="STRING" id="284812.Q9UUI8"/>
<dbReference type="TCDB" id="2.A.7.16.3">
    <property type="family name" value="the drug/metabolite transporter (dmt) superfamily"/>
</dbReference>
<dbReference type="iPTMnet" id="Q9UUI8"/>
<dbReference type="PaxDb" id="4896-SPAC22F8.04.1"/>
<dbReference type="EnsemblFungi" id="SPAC22F8.04.1">
    <property type="protein sequence ID" value="SPAC22F8.04.1:pep"/>
    <property type="gene ID" value="SPAC22F8.04"/>
</dbReference>
<dbReference type="KEGG" id="spo:2541895"/>
<dbReference type="PomBase" id="SPAC22F8.04"/>
<dbReference type="VEuPathDB" id="FungiDB:SPAC22F8.04"/>
<dbReference type="eggNOG" id="KOG1442">
    <property type="taxonomic scope" value="Eukaryota"/>
</dbReference>
<dbReference type="HOGENOM" id="CLU_044894_0_1_1"/>
<dbReference type="InParanoid" id="Q9UUI8"/>
<dbReference type="OMA" id="WWTSNIV"/>
<dbReference type="PhylomeDB" id="Q9UUI8"/>
<dbReference type="Reactome" id="R-SPO-6787639">
    <property type="pathway name" value="GDP-fucose biosynthesis"/>
</dbReference>
<dbReference type="Reactome" id="R-SPO-727802">
    <property type="pathway name" value="Transport of nucleotide sugars"/>
</dbReference>
<dbReference type="PRO" id="PR:Q9UUI8"/>
<dbReference type="Proteomes" id="UP000002485">
    <property type="component" value="Chromosome I"/>
</dbReference>
<dbReference type="GO" id="GO:0005794">
    <property type="term" value="C:Golgi apparatus"/>
    <property type="evidence" value="ECO:0000314"/>
    <property type="project" value="PomBase"/>
</dbReference>
<dbReference type="GO" id="GO:0000139">
    <property type="term" value="C:Golgi membrane"/>
    <property type="evidence" value="ECO:0000269"/>
    <property type="project" value="PomBase"/>
</dbReference>
<dbReference type="GO" id="GO:0015297">
    <property type="term" value="F:antiporter activity"/>
    <property type="evidence" value="ECO:0000318"/>
    <property type="project" value="GO_Central"/>
</dbReference>
<dbReference type="GO" id="GO:0005457">
    <property type="term" value="F:GDP-fucose transmembrane transporter activity"/>
    <property type="evidence" value="ECO:0000318"/>
    <property type="project" value="GO_Central"/>
</dbReference>
<dbReference type="GO" id="GO:0089721">
    <property type="term" value="F:phosphoenolpyruvate transmembrane transporter activity"/>
    <property type="evidence" value="ECO:0000315"/>
    <property type="project" value="PomBase"/>
</dbReference>
<dbReference type="GO" id="GO:0071917">
    <property type="term" value="F:triose-phosphate transmembrane transporter activity"/>
    <property type="evidence" value="ECO:0000255"/>
    <property type="project" value="PomBase"/>
</dbReference>
<dbReference type="GO" id="GO:0036085">
    <property type="term" value="P:GDP-fucose import into Golgi lumen"/>
    <property type="evidence" value="ECO:0000318"/>
    <property type="project" value="GO_Central"/>
</dbReference>
<dbReference type="GO" id="GO:1990536">
    <property type="term" value="P:phosphoenolpyruvate transmembrane import into Golgi lumen"/>
    <property type="evidence" value="ECO:0000315"/>
    <property type="project" value="PomBase"/>
</dbReference>
<dbReference type="InterPro" id="IPR004853">
    <property type="entry name" value="Sugar_P_trans_dom"/>
</dbReference>
<dbReference type="InterPro" id="IPR050186">
    <property type="entry name" value="TPT_transporter"/>
</dbReference>
<dbReference type="PANTHER" id="PTHR11132">
    <property type="entry name" value="SOLUTE CARRIER FAMILY 35"/>
    <property type="match status" value="1"/>
</dbReference>
<dbReference type="Pfam" id="PF03151">
    <property type="entry name" value="TPT"/>
    <property type="match status" value="1"/>
</dbReference>
<dbReference type="SUPFAM" id="SSF103481">
    <property type="entry name" value="Multidrug resistance efflux transporter EmrE"/>
    <property type="match status" value="1"/>
</dbReference>
<gene>
    <name type="ORF">SPAC22F8.04</name>
</gene>
<comment type="subcellular location">
    <subcellularLocation>
        <location evidence="3">Membrane</location>
        <topology evidence="3">Multi-pass membrane protein</topology>
    </subcellularLocation>
</comment>
<comment type="similarity">
    <text evidence="4">Belongs to the TPT transporter family.</text>
</comment>
<evidence type="ECO:0000255" key="1"/>
<evidence type="ECO:0000256" key="2">
    <source>
        <dbReference type="SAM" id="MobiDB-lite"/>
    </source>
</evidence>
<evidence type="ECO:0000269" key="3">
    <source>
    </source>
</evidence>
<evidence type="ECO:0000305" key="4"/>
<sequence length="383" mass="42626">MSSKLTVNAHYSPLKDEDPLDHIDSQTALDSMETDSTGKSSLYFSKSDDPLSKDIEDGISTRKLEEMSVLEANAKEPDSENAPVSRLTIFFAVSSQIVFAILVTILNKQALNIINAPLLMLSFQMAFTSLMVKMYWRFSSVHFQTLRLASAIQLKKFIFVKILGIVSKTYCLAFVPVSFYQISRGLLLPFTILLSFVLLKQKTRLFPFGGCLLVMLGFGFGVRFESHVAPIGIILGVWSSFTTAIESVAVKHYVHEYPTLDLIYIFSALMSVFCLLLSVASLELLHTVQEVVGMQAIKFFIVLILSSLSNFYLNIATFTQIKVTSPVTYMISVSARSILQTLLAVAFLGETLYGNRIYGVILILVGTLLYTLAKEHERRVASA</sequence>
<protein>
    <recommendedName>
        <fullName>Uncharacterized transporter C22F8.04</fullName>
    </recommendedName>
</protein>
<accession>Q9UUI8</accession>
<accession>Q9UU21</accession>